<dbReference type="EC" id="3.4.21.69"/>
<dbReference type="EMBL" id="D43750">
    <property type="protein sequence ID" value="BAA07807.1"/>
    <property type="molecule type" value="Genomic_DNA"/>
</dbReference>
<dbReference type="SMR" id="Q28412"/>
<dbReference type="STRING" id="9685.ENSFCAP00000051699"/>
<dbReference type="MEROPS" id="S01.218"/>
<dbReference type="GlyCosmos" id="Q28412">
    <property type="glycosylation" value="2 sites, No reported glycans"/>
</dbReference>
<dbReference type="PaxDb" id="9685-ENSFCAP00000008800"/>
<dbReference type="eggNOG" id="ENOG502QQ3W">
    <property type="taxonomic scope" value="Eukaryota"/>
</dbReference>
<dbReference type="InParanoid" id="Q28412"/>
<dbReference type="TreeFam" id="TF327329"/>
<dbReference type="Proteomes" id="UP000011712">
    <property type="component" value="Unplaced"/>
</dbReference>
<dbReference type="GO" id="GO:0005783">
    <property type="term" value="C:endoplasmic reticulum"/>
    <property type="evidence" value="ECO:0000250"/>
    <property type="project" value="UniProtKB"/>
</dbReference>
<dbReference type="GO" id="GO:0005576">
    <property type="term" value="C:extracellular region"/>
    <property type="evidence" value="ECO:0007669"/>
    <property type="project" value="UniProtKB-SubCell"/>
</dbReference>
<dbReference type="GO" id="GO:0005794">
    <property type="term" value="C:Golgi apparatus"/>
    <property type="evidence" value="ECO:0000250"/>
    <property type="project" value="UniProtKB"/>
</dbReference>
<dbReference type="GO" id="GO:0004252">
    <property type="term" value="F:serine-type endopeptidase activity"/>
    <property type="evidence" value="ECO:0000250"/>
    <property type="project" value="UniProtKB"/>
</dbReference>
<dbReference type="GO" id="GO:0007596">
    <property type="term" value="P:blood coagulation"/>
    <property type="evidence" value="ECO:0007669"/>
    <property type="project" value="UniProtKB-KW"/>
</dbReference>
<dbReference type="GO" id="GO:0050819">
    <property type="term" value="P:negative regulation of coagulation"/>
    <property type="evidence" value="ECO:0000250"/>
    <property type="project" value="UniProtKB"/>
</dbReference>
<dbReference type="GO" id="GO:0050728">
    <property type="term" value="P:negative regulation of inflammatory response"/>
    <property type="evidence" value="ECO:0000250"/>
    <property type="project" value="UniProtKB"/>
</dbReference>
<dbReference type="GO" id="GO:1903142">
    <property type="term" value="P:positive regulation of establishment of endothelial barrier"/>
    <property type="evidence" value="ECO:0000250"/>
    <property type="project" value="UniProtKB"/>
</dbReference>
<dbReference type="GO" id="GO:0006508">
    <property type="term" value="P:proteolysis"/>
    <property type="evidence" value="ECO:0007669"/>
    <property type="project" value="UniProtKB-KW"/>
</dbReference>
<dbReference type="CDD" id="cd00190">
    <property type="entry name" value="Tryp_SPc"/>
    <property type="match status" value="1"/>
</dbReference>
<dbReference type="FunFam" id="2.40.10.10:FF:000365">
    <property type="match status" value="1"/>
</dbReference>
<dbReference type="Gene3D" id="2.40.10.10">
    <property type="entry name" value="Trypsin-like serine proteases"/>
    <property type="match status" value="2"/>
</dbReference>
<dbReference type="InterPro" id="IPR050442">
    <property type="entry name" value="Peptidase_S1_coag_factors"/>
</dbReference>
<dbReference type="InterPro" id="IPR009003">
    <property type="entry name" value="Peptidase_S1_PA"/>
</dbReference>
<dbReference type="InterPro" id="IPR043504">
    <property type="entry name" value="Peptidase_S1_PA_chymotrypsin"/>
</dbReference>
<dbReference type="InterPro" id="IPR001314">
    <property type="entry name" value="Peptidase_S1A"/>
</dbReference>
<dbReference type="InterPro" id="IPR001254">
    <property type="entry name" value="Trypsin_dom"/>
</dbReference>
<dbReference type="InterPro" id="IPR033116">
    <property type="entry name" value="TRYPSIN_SER"/>
</dbReference>
<dbReference type="PANTHER" id="PTHR24278">
    <property type="entry name" value="COAGULATION FACTOR"/>
    <property type="match status" value="1"/>
</dbReference>
<dbReference type="PANTHER" id="PTHR24278:SF0">
    <property type="entry name" value="VITAMIN K-DEPENDENT PROTEIN C"/>
    <property type="match status" value="1"/>
</dbReference>
<dbReference type="Pfam" id="PF00089">
    <property type="entry name" value="Trypsin"/>
    <property type="match status" value="1"/>
</dbReference>
<dbReference type="PRINTS" id="PR00722">
    <property type="entry name" value="CHYMOTRYPSIN"/>
</dbReference>
<dbReference type="SMART" id="SM00020">
    <property type="entry name" value="Tryp_SPc"/>
    <property type="match status" value="1"/>
</dbReference>
<dbReference type="SUPFAM" id="SSF50494">
    <property type="entry name" value="Trypsin-like serine proteases"/>
    <property type="match status" value="1"/>
</dbReference>
<dbReference type="PROSITE" id="PS50240">
    <property type="entry name" value="TRYPSIN_DOM"/>
    <property type="match status" value="1"/>
</dbReference>
<dbReference type="PROSITE" id="PS00135">
    <property type="entry name" value="TRYPSIN_SER"/>
    <property type="match status" value="1"/>
</dbReference>
<accession>Q28412</accession>
<gene>
    <name type="primary">PROC</name>
</gene>
<sequence>EKWELDLDIKEVLMHPNYSRSTSDNDIALLRLAQPAILSQTIVPICLPDSGLAERELTQAGQETVVTGWGHRSEAKRNRTFVLNFIKVPVVPQNECINAMHNMISENMLCAGILGDSQDACEGDSGGPMVASFRGTSFLVGLVTWGEGCGRLHNYGV</sequence>
<feature type="chain" id="PRO_0000088709" description="Vitamin K-dependent protein C">
    <location>
        <begin position="1" status="less than"/>
        <end position="157" status="greater than"/>
    </location>
</feature>
<feature type="domain" description="Peptidase S1" evidence="3">
    <location>
        <begin position="1" status="less than"/>
        <end position="157" status="greater than"/>
    </location>
</feature>
<feature type="active site" description="Charge relay system">
    <location>
        <position position="26"/>
    </location>
</feature>
<feature type="active site" description="Charge relay system">
    <location>
        <position position="125"/>
    </location>
</feature>
<feature type="glycosylation site" description="N-linked (GlcNAc...) asparagine" evidence="2">
    <location>
        <position position="17"/>
    </location>
</feature>
<feature type="glycosylation site" description="N-linked (GlcNAc...) asparagine" evidence="2">
    <location>
        <position position="78"/>
    </location>
</feature>
<feature type="disulfide bond" evidence="3">
    <location>
        <begin position="96"/>
        <end position="110"/>
    </location>
</feature>
<feature type="disulfide bond" evidence="3">
    <location>
        <begin position="121"/>
        <end position="149"/>
    </location>
</feature>
<feature type="non-terminal residue">
    <location>
        <position position="1"/>
    </location>
</feature>
<feature type="non-terminal residue">
    <location>
        <position position="157"/>
    </location>
</feature>
<protein>
    <recommendedName>
        <fullName>Vitamin K-dependent protein C</fullName>
        <ecNumber>3.4.21.69</ecNumber>
    </recommendedName>
    <alternativeName>
        <fullName>Anticoagulant protein C</fullName>
    </alternativeName>
    <alternativeName>
        <fullName>Autoprothrombin IIA</fullName>
    </alternativeName>
    <alternativeName>
        <fullName>Blood coagulation factor XIV</fullName>
    </alternativeName>
</protein>
<reference key="1">
    <citation type="journal article" date="1994" name="Br. J. Haematol.">
        <title>A comparative study of partial primary structures of the catalytic region of mammalian protein C.</title>
        <authorList>
            <person name="Murakawa M."/>
            <person name="Okamura T."/>
            <person name="Kamura T."/>
            <person name="Kuroiwa M."/>
            <person name="Harada M."/>
            <person name="Niho Y."/>
        </authorList>
    </citation>
    <scope>NUCLEOTIDE SEQUENCE [GENOMIC DNA]</scope>
</reference>
<evidence type="ECO:0000250" key="1">
    <source>
        <dbReference type="UniProtKB" id="P04070"/>
    </source>
</evidence>
<evidence type="ECO:0000255" key="2"/>
<evidence type="ECO:0000255" key="3">
    <source>
        <dbReference type="PROSITE-ProRule" id="PRU00274"/>
    </source>
</evidence>
<organism>
    <name type="scientific">Felis catus</name>
    <name type="common">Cat</name>
    <name type="synonym">Felis silvestris catus</name>
    <dbReference type="NCBI Taxonomy" id="9685"/>
    <lineage>
        <taxon>Eukaryota</taxon>
        <taxon>Metazoa</taxon>
        <taxon>Chordata</taxon>
        <taxon>Craniata</taxon>
        <taxon>Vertebrata</taxon>
        <taxon>Euteleostomi</taxon>
        <taxon>Mammalia</taxon>
        <taxon>Eutheria</taxon>
        <taxon>Laurasiatheria</taxon>
        <taxon>Carnivora</taxon>
        <taxon>Feliformia</taxon>
        <taxon>Felidae</taxon>
        <taxon>Felinae</taxon>
        <taxon>Felis</taxon>
    </lineage>
</organism>
<proteinExistence type="evidence at transcript level"/>
<keyword id="KW-0094">Blood coagulation</keyword>
<keyword id="KW-1015">Disulfide bond</keyword>
<keyword id="KW-0256">Endoplasmic reticulum</keyword>
<keyword id="KW-0325">Glycoprotein</keyword>
<keyword id="KW-0333">Golgi apparatus</keyword>
<keyword id="KW-0356">Hemostasis</keyword>
<keyword id="KW-0378">Hydrolase</keyword>
<keyword id="KW-0645">Protease</keyword>
<keyword id="KW-1185">Reference proteome</keyword>
<keyword id="KW-0964">Secreted</keyword>
<keyword id="KW-0720">Serine protease</keyword>
<name>PROC_FELCA</name>
<comment type="function">
    <text evidence="1">Protein C is a vitamin K-dependent serine protease that regulates blood coagulation by inactivating factors Va and VIIIa in the presence of calcium ions and phospholipids. Exerts a protective effect on the endothelial cell barrier function.</text>
</comment>
<comment type="catalytic activity">
    <reaction>
        <text>Degradation of blood coagulation factors Va and VIIIa.</text>
        <dbReference type="EC" id="3.4.21.69"/>
    </reaction>
</comment>
<comment type="subcellular location">
    <subcellularLocation>
        <location evidence="1">Secreted</location>
    </subcellularLocation>
    <subcellularLocation>
        <location evidence="1">Golgi apparatus</location>
    </subcellularLocation>
    <subcellularLocation>
        <location evidence="1">Endoplasmic reticulum</location>
    </subcellularLocation>
</comment>
<comment type="tissue specificity">
    <text>Plasma; synthesized in the liver.</text>
</comment>
<comment type="similarity">
    <text evidence="3">Belongs to the peptidase S1 family.</text>
</comment>